<organism>
    <name type="scientific">Plasmodium falciparum</name>
    <dbReference type="NCBI Taxonomy" id="5833"/>
    <lineage>
        <taxon>Eukaryota</taxon>
        <taxon>Sar</taxon>
        <taxon>Alveolata</taxon>
        <taxon>Apicomplexa</taxon>
        <taxon>Aconoidasida</taxon>
        <taxon>Haemosporida</taxon>
        <taxon>Plasmodiidae</taxon>
        <taxon>Plasmodium</taxon>
        <taxon>Plasmodium (Laverania)</taxon>
    </lineage>
</organism>
<proteinExistence type="inferred from homology"/>
<accession>P25408</accession>
<keyword id="KW-0328">Glycosyltransferase</keyword>
<keyword id="KW-0808">Transferase</keyword>
<reference key="1">
    <citation type="journal article" date="1991" name="Mol. Biochem. Parasitol.">
        <title>The structure of the calmodulin gene of Plasmodium falciparum.</title>
        <authorList>
            <person name="Robson K.J.H."/>
            <person name="Jennings M.W."/>
        </authorList>
    </citation>
    <scope>NUCLEOTIDE SEQUENCE [GENOMIC DNA]</scope>
    <source>
        <strain>T9/96 / Thailand</strain>
    </source>
</reference>
<sequence length="241" mass="28100">EFLEKVQIIKNTNLSNSLCILSIPCTVDIDTVITETINKYDSIIDGILLSGLGYDESNETRTNAFKNILNILPNNKLKFIQLSNGNPIEILHAIYHGIDVIEPNFPYYLAKNGKAINMNLKMDNLQDGNEYNLQDKNNDNIYDINLLDFKNDVNFIIDLNNPKYVLDHSTITCNSPRKESKSYIHHLLKCHELTAHVILTYHNLYIYRSFFQEIQLHIKENNFLSYINWFIEKNELNKKEE</sequence>
<comment type="similarity">
    <text evidence="1">Belongs to the queuine tRNA-ribosyltransferase family.</text>
</comment>
<dbReference type="EMBL" id="M59770">
    <property type="protein sequence ID" value="AAA29512.1"/>
    <property type="molecule type" value="Genomic_DNA"/>
</dbReference>
<dbReference type="PIR" id="C45594">
    <property type="entry name" value="C45594"/>
</dbReference>
<dbReference type="SMR" id="P25408"/>
<dbReference type="EnsemblProtists" id="CZU00038">
    <property type="protein sequence ID" value="CZU00038"/>
    <property type="gene ID" value="PF3D7_1434100"/>
</dbReference>
<dbReference type="VEuPathDB" id="PlasmoDB:PF3D7_1434100"/>
<dbReference type="VEuPathDB" id="PlasmoDB:Pf7G8-2_000507900"/>
<dbReference type="VEuPathDB" id="PlasmoDB:Pf7G8_140039300"/>
<dbReference type="VEuPathDB" id="PlasmoDB:PfCD01_140039500"/>
<dbReference type="VEuPathDB" id="PlasmoDB:PfDd2_140038500"/>
<dbReference type="VEuPathDB" id="PlasmoDB:PfGA01_140039600"/>
<dbReference type="VEuPathDB" id="PlasmoDB:PfGB4_140040200"/>
<dbReference type="VEuPathDB" id="PlasmoDB:PfGN01_140039400"/>
<dbReference type="VEuPathDB" id="PlasmoDB:PfHB3_140039800"/>
<dbReference type="VEuPathDB" id="PlasmoDB:PfIT_140040500"/>
<dbReference type="VEuPathDB" id="PlasmoDB:PfKE01_140039000"/>
<dbReference type="VEuPathDB" id="PlasmoDB:PfKH01_140039600"/>
<dbReference type="VEuPathDB" id="PlasmoDB:PfKH02_140039800"/>
<dbReference type="VEuPathDB" id="PlasmoDB:PfML01_140039500"/>
<dbReference type="VEuPathDB" id="PlasmoDB:PfNF135_140038300"/>
<dbReference type="VEuPathDB" id="PlasmoDB:PfNF166_140037000"/>
<dbReference type="VEuPathDB" id="PlasmoDB:PfNF54_140037900"/>
<dbReference type="VEuPathDB" id="PlasmoDB:PfSD01_140037400"/>
<dbReference type="VEuPathDB" id="PlasmoDB:PfSN01_140041300"/>
<dbReference type="VEuPathDB" id="PlasmoDB:PfTG01_140039400"/>
<dbReference type="GO" id="GO:0016757">
    <property type="term" value="F:glycosyltransferase activity"/>
    <property type="evidence" value="ECO:0007669"/>
    <property type="project" value="UniProtKB-KW"/>
</dbReference>
<dbReference type="GO" id="GO:0101030">
    <property type="term" value="P:tRNA-guanine transglycosylation"/>
    <property type="evidence" value="ECO:0007669"/>
    <property type="project" value="UniProtKB-ARBA"/>
</dbReference>
<dbReference type="Gene3D" id="3.20.20.105">
    <property type="entry name" value="Queuine tRNA-ribosyltransferase-like"/>
    <property type="match status" value="1"/>
</dbReference>
<dbReference type="InterPro" id="IPR050852">
    <property type="entry name" value="Queuine_tRNA-ribosyltrfase"/>
</dbReference>
<dbReference type="InterPro" id="IPR036511">
    <property type="entry name" value="TGT-like_sf"/>
</dbReference>
<dbReference type="InterPro" id="IPR002616">
    <property type="entry name" value="tRNA_ribo_trans-like"/>
</dbReference>
<dbReference type="NCBIfam" id="TIGR00449">
    <property type="entry name" value="tgt_general"/>
    <property type="match status" value="1"/>
</dbReference>
<dbReference type="PANTHER" id="PTHR46064">
    <property type="entry name" value="QUEUINE TRNA-RIBOSYLTRANSFERASE ACCESSORY SUBUNIT 2"/>
    <property type="match status" value="1"/>
</dbReference>
<dbReference type="PANTHER" id="PTHR46064:SF1">
    <property type="entry name" value="QUEUINE TRNA-RIBOSYLTRANSFERASE ACCESSORY SUBUNIT 2"/>
    <property type="match status" value="1"/>
</dbReference>
<dbReference type="Pfam" id="PF01702">
    <property type="entry name" value="TGT"/>
    <property type="match status" value="1"/>
</dbReference>
<dbReference type="SUPFAM" id="SSF51713">
    <property type="entry name" value="tRNA-guanine transglycosylase"/>
    <property type="match status" value="1"/>
</dbReference>
<protein>
    <recommendedName>
        <fullName>Queuine tRNA-ribosyltransferase-like protein</fullName>
    </recommendedName>
</protein>
<evidence type="ECO:0000305" key="1"/>
<name>TGTL_PLAFA</name>
<feature type="chain" id="PRO_0000066167" description="Queuine tRNA-ribosyltransferase-like protein">
    <location>
        <begin position="1" status="less than"/>
        <end position="241"/>
    </location>
</feature>
<feature type="non-terminal residue">
    <location>
        <position position="1"/>
    </location>
</feature>